<accession>Q8DZC6</accession>
<reference key="1">
    <citation type="journal article" date="2002" name="Proc. Natl. Acad. Sci. U.S.A.">
        <title>Complete genome sequence and comparative genomic analysis of an emerging human pathogen, serotype V Streptococcus agalactiae.</title>
        <authorList>
            <person name="Tettelin H."/>
            <person name="Masignani V."/>
            <person name="Cieslewicz M.J."/>
            <person name="Eisen J.A."/>
            <person name="Peterson S.N."/>
            <person name="Wessels M.R."/>
            <person name="Paulsen I.T."/>
            <person name="Nelson K.E."/>
            <person name="Margarit I."/>
            <person name="Read T.D."/>
            <person name="Madoff L.C."/>
            <person name="Wolf A.M."/>
            <person name="Beanan M.J."/>
            <person name="Brinkac L.M."/>
            <person name="Daugherty S.C."/>
            <person name="DeBoy R.T."/>
            <person name="Durkin A.S."/>
            <person name="Kolonay J.F."/>
            <person name="Madupu R."/>
            <person name="Lewis M.R."/>
            <person name="Radune D."/>
            <person name="Fedorova N.B."/>
            <person name="Scanlan D."/>
            <person name="Khouri H.M."/>
            <person name="Mulligan S."/>
            <person name="Carty H.A."/>
            <person name="Cline R.T."/>
            <person name="Van Aken S.E."/>
            <person name="Gill J."/>
            <person name="Scarselli M."/>
            <person name="Mora M."/>
            <person name="Iacobini E.T."/>
            <person name="Brettoni C."/>
            <person name="Galli G."/>
            <person name="Mariani M."/>
            <person name="Vegni F."/>
            <person name="Maione D."/>
            <person name="Rinaudo D."/>
            <person name="Rappuoli R."/>
            <person name="Telford J.L."/>
            <person name="Kasper D.L."/>
            <person name="Grandi G."/>
            <person name="Fraser C.M."/>
        </authorList>
    </citation>
    <scope>NUCLEOTIDE SEQUENCE [LARGE SCALE GENOMIC DNA]</scope>
    <source>
        <strain>ATCC BAA-611 / 2603 V/R</strain>
    </source>
</reference>
<name>RPIA_STRA5</name>
<evidence type="ECO:0000255" key="1">
    <source>
        <dbReference type="HAMAP-Rule" id="MF_00170"/>
    </source>
</evidence>
<keyword id="KW-0413">Isomerase</keyword>
<keyword id="KW-1185">Reference proteome</keyword>
<sequence>MDELKKLAGVTAAKYVKNGMIVGLGTGSTAYFFVEEIGRRVKEEGLQVVGVTTSNRTTEQARGLGIPLKSADDIDVIDVTVDGADEVDPDFNGIKGGGGALLMEKIVATPTKEYIWVVDESKLVETLGAFKLPVEVVRYGSERLFRVFKSKGYCPSFRETEGDRFITDMGNYIIDLDLKKIEDPKQLANELDHTVGVVEHGLFNGMVNKVIVAGKNGLDILEK</sequence>
<feature type="chain" id="PRO_0000158472" description="Ribose-5-phosphate isomerase A">
    <location>
        <begin position="1"/>
        <end position="223"/>
    </location>
</feature>
<feature type="active site" description="Proton acceptor" evidence="1">
    <location>
        <position position="104"/>
    </location>
</feature>
<feature type="binding site" evidence="1">
    <location>
        <begin position="26"/>
        <end position="29"/>
    </location>
    <ligand>
        <name>substrate</name>
    </ligand>
</feature>
<feature type="binding site" evidence="1">
    <location>
        <begin position="82"/>
        <end position="85"/>
    </location>
    <ligand>
        <name>substrate</name>
    </ligand>
</feature>
<feature type="binding site" evidence="1">
    <location>
        <begin position="95"/>
        <end position="98"/>
    </location>
    <ligand>
        <name>substrate</name>
    </ligand>
</feature>
<feature type="binding site" evidence="1">
    <location>
        <position position="122"/>
    </location>
    <ligand>
        <name>substrate</name>
    </ligand>
</feature>
<protein>
    <recommendedName>
        <fullName evidence="1">Ribose-5-phosphate isomerase A</fullName>
        <ecNumber evidence="1">5.3.1.6</ecNumber>
    </recommendedName>
    <alternativeName>
        <fullName evidence="1">Phosphoriboisomerase A</fullName>
        <shortName evidence="1">PRI</shortName>
    </alternativeName>
</protein>
<organism>
    <name type="scientific">Streptococcus agalactiae serotype V (strain ATCC BAA-611 / 2603 V/R)</name>
    <dbReference type="NCBI Taxonomy" id="208435"/>
    <lineage>
        <taxon>Bacteria</taxon>
        <taxon>Bacillati</taxon>
        <taxon>Bacillota</taxon>
        <taxon>Bacilli</taxon>
        <taxon>Lactobacillales</taxon>
        <taxon>Streptococcaceae</taxon>
        <taxon>Streptococcus</taxon>
    </lineage>
</organism>
<gene>
    <name evidence="1" type="primary">rpiA</name>
    <name type="ordered locus">SAG1183</name>
</gene>
<comment type="function">
    <text evidence="1">Catalyzes the reversible conversion of ribose-5-phosphate to ribulose 5-phosphate.</text>
</comment>
<comment type="catalytic activity">
    <reaction evidence="1">
        <text>aldehydo-D-ribose 5-phosphate = D-ribulose 5-phosphate</text>
        <dbReference type="Rhea" id="RHEA:14657"/>
        <dbReference type="ChEBI" id="CHEBI:58121"/>
        <dbReference type="ChEBI" id="CHEBI:58273"/>
        <dbReference type="EC" id="5.3.1.6"/>
    </reaction>
</comment>
<comment type="pathway">
    <text evidence="1">Carbohydrate degradation; pentose phosphate pathway; D-ribose 5-phosphate from D-ribulose 5-phosphate (non-oxidative stage): step 1/1.</text>
</comment>
<comment type="subunit">
    <text evidence="1">Homodimer.</text>
</comment>
<comment type="similarity">
    <text evidence="1">Belongs to the ribose 5-phosphate isomerase family.</text>
</comment>
<dbReference type="EC" id="5.3.1.6" evidence="1"/>
<dbReference type="EMBL" id="AE009948">
    <property type="protein sequence ID" value="AAN00065.1"/>
    <property type="molecule type" value="Genomic_DNA"/>
</dbReference>
<dbReference type="RefSeq" id="NP_688192.1">
    <property type="nucleotide sequence ID" value="NC_004116.1"/>
</dbReference>
<dbReference type="RefSeq" id="WP_000343882.1">
    <property type="nucleotide sequence ID" value="NC_004116.1"/>
</dbReference>
<dbReference type="SMR" id="Q8DZC6"/>
<dbReference type="STRING" id="208435.SAG1183"/>
<dbReference type="KEGG" id="sag:SAG1183"/>
<dbReference type="PATRIC" id="fig|208435.3.peg.1190"/>
<dbReference type="HOGENOM" id="CLU_056590_1_0_9"/>
<dbReference type="OrthoDB" id="5870696at2"/>
<dbReference type="UniPathway" id="UPA00115">
    <property type="reaction ID" value="UER00412"/>
</dbReference>
<dbReference type="Proteomes" id="UP000000821">
    <property type="component" value="Chromosome"/>
</dbReference>
<dbReference type="GO" id="GO:0004751">
    <property type="term" value="F:ribose-5-phosphate isomerase activity"/>
    <property type="evidence" value="ECO:0007669"/>
    <property type="project" value="UniProtKB-UniRule"/>
</dbReference>
<dbReference type="GO" id="GO:0009052">
    <property type="term" value="P:pentose-phosphate shunt, non-oxidative branch"/>
    <property type="evidence" value="ECO:0007669"/>
    <property type="project" value="UniProtKB-UniRule"/>
</dbReference>
<dbReference type="CDD" id="cd01398">
    <property type="entry name" value="RPI_A"/>
    <property type="match status" value="1"/>
</dbReference>
<dbReference type="FunFam" id="3.40.50.1360:FF:000001">
    <property type="entry name" value="Ribose-5-phosphate isomerase A"/>
    <property type="match status" value="1"/>
</dbReference>
<dbReference type="Gene3D" id="3.30.70.260">
    <property type="match status" value="1"/>
</dbReference>
<dbReference type="Gene3D" id="3.40.50.1360">
    <property type="match status" value="1"/>
</dbReference>
<dbReference type="HAMAP" id="MF_00170">
    <property type="entry name" value="Rib_5P_isom_A"/>
    <property type="match status" value="1"/>
</dbReference>
<dbReference type="InterPro" id="IPR037171">
    <property type="entry name" value="NagB/RpiA_transferase-like"/>
</dbReference>
<dbReference type="InterPro" id="IPR050262">
    <property type="entry name" value="Ribose-5P_isomerase"/>
</dbReference>
<dbReference type="InterPro" id="IPR020672">
    <property type="entry name" value="Ribose5P_isomerase_typA_subgr"/>
</dbReference>
<dbReference type="InterPro" id="IPR004788">
    <property type="entry name" value="Ribose5P_isomerase_type_A"/>
</dbReference>
<dbReference type="NCBIfam" id="NF001924">
    <property type="entry name" value="PRK00702.1"/>
    <property type="match status" value="1"/>
</dbReference>
<dbReference type="NCBIfam" id="TIGR00021">
    <property type="entry name" value="rpiA"/>
    <property type="match status" value="1"/>
</dbReference>
<dbReference type="PANTHER" id="PTHR43748">
    <property type="entry name" value="RIBOSE-5-PHOSPHATE ISOMERASE 3, CHLOROPLASTIC-RELATED"/>
    <property type="match status" value="1"/>
</dbReference>
<dbReference type="PANTHER" id="PTHR43748:SF3">
    <property type="entry name" value="RIBOSE-5-PHOSPHATE ISOMERASE 3, CHLOROPLASTIC-RELATED"/>
    <property type="match status" value="1"/>
</dbReference>
<dbReference type="Pfam" id="PF06026">
    <property type="entry name" value="Rib_5-P_isom_A"/>
    <property type="match status" value="1"/>
</dbReference>
<dbReference type="SUPFAM" id="SSF75445">
    <property type="entry name" value="D-ribose-5-phosphate isomerase (RpiA), lid domain"/>
    <property type="match status" value="1"/>
</dbReference>
<dbReference type="SUPFAM" id="SSF100950">
    <property type="entry name" value="NagB/RpiA/CoA transferase-like"/>
    <property type="match status" value="1"/>
</dbReference>
<proteinExistence type="inferred from homology"/>